<evidence type="ECO:0000255" key="1">
    <source>
        <dbReference type="HAMAP-Rule" id="MF_00641"/>
    </source>
</evidence>
<protein>
    <recommendedName>
        <fullName evidence="1">Malate synthase G</fullName>
        <ecNumber evidence="1">2.3.3.9</ecNumber>
    </recommendedName>
</protein>
<organism>
    <name type="scientific">Bradyrhizobium sp. (strain ORS 278)</name>
    <dbReference type="NCBI Taxonomy" id="114615"/>
    <lineage>
        <taxon>Bacteria</taxon>
        <taxon>Pseudomonadati</taxon>
        <taxon>Pseudomonadota</taxon>
        <taxon>Alphaproteobacteria</taxon>
        <taxon>Hyphomicrobiales</taxon>
        <taxon>Nitrobacteraceae</taxon>
        <taxon>Bradyrhizobium</taxon>
    </lineage>
</organism>
<comment type="function">
    <text evidence="1">Involved in the glycolate utilization. Catalyzes the condensation and subsequent hydrolysis of acetyl-coenzyme A (acetyl-CoA) and glyoxylate to form malate and CoA.</text>
</comment>
<comment type="catalytic activity">
    <reaction evidence="1">
        <text>glyoxylate + acetyl-CoA + H2O = (S)-malate + CoA + H(+)</text>
        <dbReference type="Rhea" id="RHEA:18181"/>
        <dbReference type="ChEBI" id="CHEBI:15377"/>
        <dbReference type="ChEBI" id="CHEBI:15378"/>
        <dbReference type="ChEBI" id="CHEBI:15589"/>
        <dbReference type="ChEBI" id="CHEBI:36655"/>
        <dbReference type="ChEBI" id="CHEBI:57287"/>
        <dbReference type="ChEBI" id="CHEBI:57288"/>
        <dbReference type="EC" id="2.3.3.9"/>
    </reaction>
</comment>
<comment type="cofactor">
    <cofactor evidence="1">
        <name>Mg(2+)</name>
        <dbReference type="ChEBI" id="CHEBI:18420"/>
    </cofactor>
</comment>
<comment type="pathway">
    <text evidence="1">Carbohydrate metabolism; glyoxylate cycle; (S)-malate from isocitrate: step 2/2.</text>
</comment>
<comment type="subunit">
    <text evidence="1">Monomer.</text>
</comment>
<comment type="subcellular location">
    <subcellularLocation>
        <location evidence="1">Cytoplasm</location>
    </subcellularLocation>
</comment>
<comment type="similarity">
    <text evidence="1">Belongs to the malate synthase family. GlcB subfamily.</text>
</comment>
<accession>A4YM47</accession>
<gene>
    <name evidence="1" type="primary">glcB</name>
    <name type="ordered locus">BRADO1059</name>
</gene>
<sequence>MTRIDAHGLKIAPVLFDFITKEAAPKTGIDPDAFWAGVAAILRDLGSKNRELLKFRDTLQDKIDAWHLANKGKAFDLGAYTAFLKEIGYLLPEPATQKVETANVDDEIGKICGPQLVVPLTNARYALNAANARWGSLYDAFYGTDAIPHDPSEGGKGYNKARGDKVIAKAKAFLDAAAPLATGSHTDVTAYSVIAGQLSAKLKSGNATALKNAGQFAGYQGSAEAPSVILLANNGLHVEVVIDRSHVIGKDDPAGVSDMILEAAVSTILDMEDSVAAVDAEDKVLVYRNTLGLMNGTLSADFEKGGKTLTRALNSDRSYTTPSGGTLALHGRSLLLIRNCGHHMFTDAVLGADGEEIPEGILDAAVTGLLAIHDLKGHSKVKNSRTGSIYIVKPKMHGPDEVALTVELFARVEKMLGLPENTMKVGIMDEERRTTVNLKACIQQASKRIVFINTGFLDRTGDEIHTSMEAGPMIRKNEMKAQPWIKAYEDWNVDMGLIDGLPGHAQIGKGMWAAPDKMADMLAQKIGHPSAGATTAWVPSPTAATLHALHYHQVNVKARQDELTKGGPRAKLGDILTIPVSNSNWAPDDVRQEIDNNCQGILGYVVRWIDQGVGCSKVPDIHDVGLMEDRATLRISSQHLANWLHHGVVSKDQVMDSLKRMAVVVDKQNAGDPLYQPMAPSFDGVAFKAACDLVFEGRTQPNGYTEYILTARRREAKASETAKA</sequence>
<proteinExistence type="inferred from homology"/>
<feature type="chain" id="PRO_1000056896" description="Malate synthase G">
    <location>
        <begin position="1"/>
        <end position="724"/>
    </location>
</feature>
<feature type="active site" description="Proton acceptor" evidence="1">
    <location>
        <position position="338"/>
    </location>
</feature>
<feature type="active site" description="Proton donor" evidence="1">
    <location>
        <position position="629"/>
    </location>
</feature>
<feature type="binding site" evidence="1">
    <location>
        <position position="117"/>
    </location>
    <ligand>
        <name>acetyl-CoA</name>
        <dbReference type="ChEBI" id="CHEBI:57288"/>
    </ligand>
</feature>
<feature type="binding site" evidence="1">
    <location>
        <begin position="124"/>
        <end position="125"/>
    </location>
    <ligand>
        <name>acetyl-CoA</name>
        <dbReference type="ChEBI" id="CHEBI:57288"/>
    </ligand>
</feature>
<feature type="binding site" evidence="1">
    <location>
        <position position="274"/>
    </location>
    <ligand>
        <name>acetyl-CoA</name>
        <dbReference type="ChEBI" id="CHEBI:57288"/>
    </ligand>
</feature>
<feature type="binding site" evidence="1">
    <location>
        <position position="311"/>
    </location>
    <ligand>
        <name>acetyl-CoA</name>
        <dbReference type="ChEBI" id="CHEBI:57288"/>
    </ligand>
</feature>
<feature type="binding site" evidence="1">
    <location>
        <position position="338"/>
    </location>
    <ligand>
        <name>glyoxylate</name>
        <dbReference type="ChEBI" id="CHEBI:36655"/>
    </ligand>
</feature>
<feature type="binding site" evidence="1">
    <location>
        <position position="430"/>
    </location>
    <ligand>
        <name>glyoxylate</name>
        <dbReference type="ChEBI" id="CHEBI:36655"/>
    </ligand>
</feature>
<feature type="binding site" evidence="1">
    <location>
        <position position="430"/>
    </location>
    <ligand>
        <name>Mg(2+)</name>
        <dbReference type="ChEBI" id="CHEBI:18420"/>
    </ligand>
</feature>
<feature type="binding site" evidence="1">
    <location>
        <begin position="455"/>
        <end position="458"/>
    </location>
    <ligand>
        <name>glyoxylate</name>
        <dbReference type="ChEBI" id="CHEBI:36655"/>
    </ligand>
</feature>
<feature type="binding site" evidence="1">
    <location>
        <position position="458"/>
    </location>
    <ligand>
        <name>Mg(2+)</name>
        <dbReference type="ChEBI" id="CHEBI:18420"/>
    </ligand>
</feature>
<feature type="binding site" evidence="1">
    <location>
        <position position="539"/>
    </location>
    <ligand>
        <name>acetyl-CoA</name>
        <dbReference type="ChEBI" id="CHEBI:57288"/>
    </ligand>
</feature>
<feature type="modified residue" description="Cysteine sulfenic acid (-SOH)" evidence="1">
    <location>
        <position position="615"/>
    </location>
</feature>
<dbReference type="EC" id="2.3.3.9" evidence="1"/>
<dbReference type="EMBL" id="CU234118">
    <property type="protein sequence ID" value="CAL74973.1"/>
    <property type="molecule type" value="Genomic_DNA"/>
</dbReference>
<dbReference type="RefSeq" id="WP_011924220.1">
    <property type="nucleotide sequence ID" value="NC_009445.1"/>
</dbReference>
<dbReference type="SMR" id="A4YM47"/>
<dbReference type="STRING" id="114615.BRADO1059"/>
<dbReference type="KEGG" id="bra:BRADO1059"/>
<dbReference type="eggNOG" id="COG2225">
    <property type="taxonomic scope" value="Bacteria"/>
</dbReference>
<dbReference type="HOGENOM" id="CLU_028446_1_0_5"/>
<dbReference type="OrthoDB" id="9762054at2"/>
<dbReference type="UniPathway" id="UPA00703">
    <property type="reaction ID" value="UER00720"/>
</dbReference>
<dbReference type="Proteomes" id="UP000001994">
    <property type="component" value="Chromosome"/>
</dbReference>
<dbReference type="GO" id="GO:0005829">
    <property type="term" value="C:cytosol"/>
    <property type="evidence" value="ECO:0007669"/>
    <property type="project" value="TreeGrafter"/>
</dbReference>
<dbReference type="GO" id="GO:0000287">
    <property type="term" value="F:magnesium ion binding"/>
    <property type="evidence" value="ECO:0007669"/>
    <property type="project" value="TreeGrafter"/>
</dbReference>
<dbReference type="GO" id="GO:0004474">
    <property type="term" value="F:malate synthase activity"/>
    <property type="evidence" value="ECO:0007669"/>
    <property type="project" value="UniProtKB-UniRule"/>
</dbReference>
<dbReference type="GO" id="GO:0009436">
    <property type="term" value="P:glyoxylate catabolic process"/>
    <property type="evidence" value="ECO:0007669"/>
    <property type="project" value="TreeGrafter"/>
</dbReference>
<dbReference type="GO" id="GO:0006097">
    <property type="term" value="P:glyoxylate cycle"/>
    <property type="evidence" value="ECO:0007669"/>
    <property type="project" value="UniProtKB-UniRule"/>
</dbReference>
<dbReference type="GO" id="GO:0006099">
    <property type="term" value="P:tricarboxylic acid cycle"/>
    <property type="evidence" value="ECO:0007669"/>
    <property type="project" value="UniProtKB-KW"/>
</dbReference>
<dbReference type="FunFam" id="3.20.20.360:FF:000002">
    <property type="entry name" value="Malate synthase G"/>
    <property type="match status" value="1"/>
</dbReference>
<dbReference type="Gene3D" id="3.20.20.360">
    <property type="entry name" value="Malate synthase, domain 3"/>
    <property type="match status" value="2"/>
</dbReference>
<dbReference type="Gene3D" id="1.20.1220.12">
    <property type="entry name" value="Malate synthase, domain III"/>
    <property type="match status" value="1"/>
</dbReference>
<dbReference type="HAMAP" id="MF_00641">
    <property type="entry name" value="Malate_synth_G"/>
    <property type="match status" value="1"/>
</dbReference>
<dbReference type="InterPro" id="IPR044856">
    <property type="entry name" value="Malate_synth_C_sf"/>
</dbReference>
<dbReference type="InterPro" id="IPR011076">
    <property type="entry name" value="Malate_synth_sf"/>
</dbReference>
<dbReference type="InterPro" id="IPR001465">
    <property type="entry name" value="Malate_synthase_TIM"/>
</dbReference>
<dbReference type="InterPro" id="IPR006253">
    <property type="entry name" value="Malate_synthG"/>
</dbReference>
<dbReference type="InterPro" id="IPR048355">
    <property type="entry name" value="MS_C"/>
</dbReference>
<dbReference type="InterPro" id="IPR048356">
    <property type="entry name" value="MS_N"/>
</dbReference>
<dbReference type="InterPro" id="IPR046363">
    <property type="entry name" value="MS_N_TIM-barrel_dom"/>
</dbReference>
<dbReference type="InterPro" id="IPR048357">
    <property type="entry name" value="MSG_insertion"/>
</dbReference>
<dbReference type="NCBIfam" id="TIGR01345">
    <property type="entry name" value="malate_syn_G"/>
    <property type="match status" value="1"/>
</dbReference>
<dbReference type="NCBIfam" id="NF002825">
    <property type="entry name" value="PRK02999.1"/>
    <property type="match status" value="1"/>
</dbReference>
<dbReference type="PANTHER" id="PTHR42739">
    <property type="entry name" value="MALATE SYNTHASE G"/>
    <property type="match status" value="1"/>
</dbReference>
<dbReference type="PANTHER" id="PTHR42739:SF1">
    <property type="entry name" value="MALATE SYNTHASE G"/>
    <property type="match status" value="1"/>
</dbReference>
<dbReference type="Pfam" id="PF20659">
    <property type="entry name" value="MS_C"/>
    <property type="match status" value="1"/>
</dbReference>
<dbReference type="Pfam" id="PF20656">
    <property type="entry name" value="MS_N"/>
    <property type="match status" value="1"/>
</dbReference>
<dbReference type="Pfam" id="PF01274">
    <property type="entry name" value="MS_TIM-barrel"/>
    <property type="match status" value="1"/>
</dbReference>
<dbReference type="Pfam" id="PF20658">
    <property type="entry name" value="MSG_insertion"/>
    <property type="match status" value="1"/>
</dbReference>
<dbReference type="SUPFAM" id="SSF51645">
    <property type="entry name" value="Malate synthase G"/>
    <property type="match status" value="1"/>
</dbReference>
<reference key="1">
    <citation type="journal article" date="2007" name="Science">
        <title>Legumes symbioses: absence of nod genes in photosynthetic bradyrhizobia.</title>
        <authorList>
            <person name="Giraud E."/>
            <person name="Moulin L."/>
            <person name="Vallenet D."/>
            <person name="Barbe V."/>
            <person name="Cytryn E."/>
            <person name="Avarre J.-C."/>
            <person name="Jaubert M."/>
            <person name="Simon D."/>
            <person name="Cartieaux F."/>
            <person name="Prin Y."/>
            <person name="Bena G."/>
            <person name="Hannibal L."/>
            <person name="Fardoux J."/>
            <person name="Kojadinovic M."/>
            <person name="Vuillet L."/>
            <person name="Lajus A."/>
            <person name="Cruveiller S."/>
            <person name="Rouy Z."/>
            <person name="Mangenot S."/>
            <person name="Segurens B."/>
            <person name="Dossat C."/>
            <person name="Franck W.L."/>
            <person name="Chang W.-S."/>
            <person name="Saunders E."/>
            <person name="Bruce D."/>
            <person name="Richardson P."/>
            <person name="Normand P."/>
            <person name="Dreyfus B."/>
            <person name="Pignol D."/>
            <person name="Stacey G."/>
            <person name="Emerich D."/>
            <person name="Vermeglio A."/>
            <person name="Medigue C."/>
            <person name="Sadowsky M."/>
        </authorList>
    </citation>
    <scope>NUCLEOTIDE SEQUENCE [LARGE SCALE GENOMIC DNA]</scope>
    <source>
        <strain>ORS 278</strain>
    </source>
</reference>
<name>MASZ_BRASO</name>
<keyword id="KW-0963">Cytoplasm</keyword>
<keyword id="KW-0329">Glyoxylate bypass</keyword>
<keyword id="KW-0460">Magnesium</keyword>
<keyword id="KW-0479">Metal-binding</keyword>
<keyword id="KW-0558">Oxidation</keyword>
<keyword id="KW-1185">Reference proteome</keyword>
<keyword id="KW-0808">Transferase</keyword>
<keyword id="KW-0816">Tricarboxylic acid cycle</keyword>